<sequence length="463" mass="50728">MNGSTSSDAVDPGLCVTTPSPVKQTLTLGSDTFNKDDKQITPSIRRSNSTRSKGINFNVAISPLATGQTPPSSKGGHRKTASYDAKNLHLPQLAESSPSSTIPDSPIPTASEELKYDLPLPSTEQLMGLDIDDQLRLLALKEMSIVEIKDSIGNLTSKLQRNENELHSLREVIQRSLYKELNSSSSKSKKETSSNGFVTRPQRQNSNPREEAIASTKNRSRRRTLSSSSSGVPPVLSSQQLSQNTDKQSRRDSTLWSNLSKPLNLIQQFDSMLQHEFEKSMIPQKNQEGSDKTMDSHKSRHSEDSTSSLGSISSPLNSKSKSVTGKQSNDELDRYFAQQSTSGASKDKPDGVVPTESHMNSDDMIQAVSSSIWSFVNDVKTNVLSSLADEDVPESRSHVTKGPSGFSNSNDQKEINDLTVYNLDTGSTVSLDKNEDSDLDYTFVHNTANEDRAAVDHDKSKND</sequence>
<accession>Q6BXG5</accession>
<dbReference type="EMBL" id="CR382134">
    <property type="protein sequence ID" value="CAG85095.2"/>
    <property type="molecule type" value="Genomic_DNA"/>
</dbReference>
<dbReference type="RefSeq" id="XP_457104.2">
    <property type="nucleotide sequence ID" value="XM_457104.1"/>
</dbReference>
<dbReference type="SMR" id="Q6BXG5"/>
<dbReference type="GeneID" id="2913122"/>
<dbReference type="KEGG" id="dha:DEHA2B03212g"/>
<dbReference type="VEuPathDB" id="FungiDB:DEHA2B03212g"/>
<dbReference type="eggNOG" id="ENOG502SETW">
    <property type="taxonomic scope" value="Eukaryota"/>
</dbReference>
<dbReference type="HOGENOM" id="CLU_046869_1_0_1"/>
<dbReference type="InParanoid" id="Q6BXG5"/>
<dbReference type="OMA" id="EMCIVEL"/>
<dbReference type="OrthoDB" id="4036304at2759"/>
<dbReference type="Proteomes" id="UP000000599">
    <property type="component" value="Chromosome B"/>
</dbReference>
<dbReference type="GO" id="GO:0005737">
    <property type="term" value="C:cytoplasm"/>
    <property type="evidence" value="ECO:0007669"/>
    <property type="project" value="UniProtKB-SubCell"/>
</dbReference>
<protein>
    <recommendedName>
        <fullName>Topoisomerase I damage affected protein 11</fullName>
    </recommendedName>
</protein>
<name>TDA11_DEBHA</name>
<feature type="chain" id="PRO_0000410756" description="Topoisomerase I damage affected protein 11">
    <location>
        <begin position="1"/>
        <end position="463"/>
    </location>
</feature>
<feature type="region of interest" description="Disordered" evidence="3">
    <location>
        <begin position="1"/>
        <end position="110"/>
    </location>
</feature>
<feature type="region of interest" description="Disordered" evidence="3">
    <location>
        <begin position="180"/>
        <end position="255"/>
    </location>
</feature>
<feature type="region of interest" description="Disordered" evidence="3">
    <location>
        <begin position="281"/>
        <end position="358"/>
    </location>
</feature>
<feature type="region of interest" description="Disordered" evidence="3">
    <location>
        <begin position="388"/>
        <end position="413"/>
    </location>
</feature>
<feature type="coiled-coil region" evidence="2">
    <location>
        <begin position="145"/>
        <end position="177"/>
    </location>
</feature>
<feature type="compositionally biased region" description="Polar residues" evidence="3">
    <location>
        <begin position="17"/>
        <end position="32"/>
    </location>
</feature>
<feature type="compositionally biased region" description="Polar residues" evidence="3">
    <location>
        <begin position="40"/>
        <end position="55"/>
    </location>
</feature>
<feature type="compositionally biased region" description="Low complexity" evidence="3">
    <location>
        <begin position="96"/>
        <end position="110"/>
    </location>
</feature>
<feature type="compositionally biased region" description="Low complexity" evidence="3">
    <location>
        <begin position="225"/>
        <end position="238"/>
    </location>
</feature>
<feature type="compositionally biased region" description="Basic and acidic residues" evidence="3">
    <location>
        <begin position="288"/>
        <end position="304"/>
    </location>
</feature>
<feature type="compositionally biased region" description="Low complexity" evidence="3">
    <location>
        <begin position="305"/>
        <end position="322"/>
    </location>
</feature>
<proteinExistence type="inferred from homology"/>
<evidence type="ECO:0000250" key="1"/>
<evidence type="ECO:0000255" key="2"/>
<evidence type="ECO:0000256" key="3">
    <source>
        <dbReference type="SAM" id="MobiDB-lite"/>
    </source>
</evidence>
<evidence type="ECO:0000305" key="4"/>
<keyword id="KW-0175">Coiled coil</keyword>
<keyword id="KW-0963">Cytoplasm</keyword>
<keyword id="KW-1185">Reference proteome</keyword>
<reference key="1">
    <citation type="journal article" date="2004" name="Nature">
        <title>Genome evolution in yeasts.</title>
        <authorList>
            <person name="Dujon B."/>
            <person name="Sherman D."/>
            <person name="Fischer G."/>
            <person name="Durrens P."/>
            <person name="Casaregola S."/>
            <person name="Lafontaine I."/>
            <person name="de Montigny J."/>
            <person name="Marck C."/>
            <person name="Neuveglise C."/>
            <person name="Talla E."/>
            <person name="Goffard N."/>
            <person name="Frangeul L."/>
            <person name="Aigle M."/>
            <person name="Anthouard V."/>
            <person name="Babour A."/>
            <person name="Barbe V."/>
            <person name="Barnay S."/>
            <person name="Blanchin S."/>
            <person name="Beckerich J.-M."/>
            <person name="Beyne E."/>
            <person name="Bleykasten C."/>
            <person name="Boisrame A."/>
            <person name="Boyer J."/>
            <person name="Cattolico L."/>
            <person name="Confanioleri F."/>
            <person name="de Daruvar A."/>
            <person name="Despons L."/>
            <person name="Fabre E."/>
            <person name="Fairhead C."/>
            <person name="Ferry-Dumazet H."/>
            <person name="Groppi A."/>
            <person name="Hantraye F."/>
            <person name="Hennequin C."/>
            <person name="Jauniaux N."/>
            <person name="Joyet P."/>
            <person name="Kachouri R."/>
            <person name="Kerrest A."/>
            <person name="Koszul R."/>
            <person name="Lemaire M."/>
            <person name="Lesur I."/>
            <person name="Ma L."/>
            <person name="Muller H."/>
            <person name="Nicaud J.-M."/>
            <person name="Nikolski M."/>
            <person name="Oztas S."/>
            <person name="Ozier-Kalogeropoulos O."/>
            <person name="Pellenz S."/>
            <person name="Potier S."/>
            <person name="Richard G.-F."/>
            <person name="Straub M.-L."/>
            <person name="Suleau A."/>
            <person name="Swennen D."/>
            <person name="Tekaia F."/>
            <person name="Wesolowski-Louvel M."/>
            <person name="Westhof E."/>
            <person name="Wirth B."/>
            <person name="Zeniou-Meyer M."/>
            <person name="Zivanovic Y."/>
            <person name="Bolotin-Fukuhara M."/>
            <person name="Thierry A."/>
            <person name="Bouchier C."/>
            <person name="Caudron B."/>
            <person name="Scarpelli C."/>
            <person name="Gaillardin C."/>
            <person name="Weissenbach J."/>
            <person name="Wincker P."/>
            <person name="Souciet J.-L."/>
        </authorList>
    </citation>
    <scope>NUCLEOTIDE SEQUENCE [LARGE SCALE GENOMIC DNA]</scope>
    <source>
        <strain>ATCC 36239 / CBS 767 / BCRC 21394 / JCM 1990 / NBRC 0083 / IGC 2968</strain>
    </source>
</reference>
<gene>
    <name type="primary">TDA11</name>
    <name type="ordered locus">DEHA2B03212g</name>
</gene>
<organism>
    <name type="scientific">Debaryomyces hansenii (strain ATCC 36239 / CBS 767 / BCRC 21394 / JCM 1990 / NBRC 0083 / IGC 2968)</name>
    <name type="common">Yeast</name>
    <name type="synonym">Torulaspora hansenii</name>
    <dbReference type="NCBI Taxonomy" id="284592"/>
    <lineage>
        <taxon>Eukaryota</taxon>
        <taxon>Fungi</taxon>
        <taxon>Dikarya</taxon>
        <taxon>Ascomycota</taxon>
        <taxon>Saccharomycotina</taxon>
        <taxon>Pichiomycetes</taxon>
        <taxon>Debaryomycetaceae</taxon>
        <taxon>Debaryomyces</taxon>
    </lineage>
</organism>
<comment type="subcellular location">
    <subcellularLocation>
        <location evidence="1">Cytoplasm</location>
    </subcellularLocation>
</comment>
<comment type="similarity">
    <text evidence="4">Belongs to the TDA11 family.</text>
</comment>